<organismHost>
    <name type="scientific">Melanoplus sanguinipes</name>
    <name type="common">Migratory grasshopper</name>
    <dbReference type="NCBI Taxonomy" id="65742"/>
</organismHost>
<accession>Q9YW06</accession>
<organism>
    <name type="scientific">Melanoplus sanguinipes entomopoxvirus</name>
    <name type="common">MsEPV</name>
    <dbReference type="NCBI Taxonomy" id="83191"/>
    <lineage>
        <taxon>Viruses</taxon>
        <taxon>Varidnaviria</taxon>
        <taxon>Bamfordvirae</taxon>
        <taxon>Nucleocytoviricota</taxon>
        <taxon>Pokkesviricetes</taxon>
        <taxon>Chitovirales</taxon>
        <taxon>Poxviridae</taxon>
        <taxon>Entomopoxvirinae</taxon>
        <taxon>Deltaentomopoxvirus</taxon>
    </lineage>
</organism>
<name>NPH2_MSEPV</name>
<dbReference type="EC" id="3.6.4.13"/>
<dbReference type="EMBL" id="AF063866">
    <property type="protein sequence ID" value="AAC97810.1"/>
    <property type="molecule type" value="Genomic_DNA"/>
</dbReference>
<dbReference type="PIR" id="T28247">
    <property type="entry name" value="T28247"/>
</dbReference>
<dbReference type="RefSeq" id="NP_048157.1">
    <property type="nucleotide sequence ID" value="NC_001993.1"/>
</dbReference>
<dbReference type="SMR" id="Q9YW06"/>
<dbReference type="GeneID" id="1449805"/>
<dbReference type="KEGG" id="vg:1449805"/>
<dbReference type="OrthoDB" id="892at10239"/>
<dbReference type="Proteomes" id="UP000172353">
    <property type="component" value="Segment"/>
</dbReference>
<dbReference type="GO" id="GO:0044423">
    <property type="term" value="C:virion component"/>
    <property type="evidence" value="ECO:0007669"/>
    <property type="project" value="UniProtKB-KW"/>
</dbReference>
<dbReference type="GO" id="GO:0005524">
    <property type="term" value="F:ATP binding"/>
    <property type="evidence" value="ECO:0007669"/>
    <property type="project" value="UniProtKB-KW"/>
</dbReference>
<dbReference type="GO" id="GO:0016887">
    <property type="term" value="F:ATP hydrolysis activity"/>
    <property type="evidence" value="ECO:0007669"/>
    <property type="project" value="RHEA"/>
</dbReference>
<dbReference type="GO" id="GO:0003723">
    <property type="term" value="F:RNA binding"/>
    <property type="evidence" value="ECO:0007669"/>
    <property type="project" value="TreeGrafter"/>
</dbReference>
<dbReference type="GO" id="GO:0003724">
    <property type="term" value="F:RNA helicase activity"/>
    <property type="evidence" value="ECO:0007669"/>
    <property type="project" value="UniProtKB-EC"/>
</dbReference>
<dbReference type="Gene3D" id="3.40.50.300">
    <property type="entry name" value="P-loop containing nucleotide triphosphate hydrolases"/>
    <property type="match status" value="2"/>
</dbReference>
<dbReference type="InterPro" id="IPR011545">
    <property type="entry name" value="DEAD/DEAH_box_helicase_dom"/>
</dbReference>
<dbReference type="InterPro" id="IPR014001">
    <property type="entry name" value="Helicase_ATP-bd"/>
</dbReference>
<dbReference type="InterPro" id="IPR001650">
    <property type="entry name" value="Helicase_C-like"/>
</dbReference>
<dbReference type="InterPro" id="IPR021892">
    <property type="entry name" value="NPH-II"/>
</dbReference>
<dbReference type="InterPro" id="IPR027417">
    <property type="entry name" value="P-loop_NTPase"/>
</dbReference>
<dbReference type="PANTHER" id="PTHR18934">
    <property type="entry name" value="ATP-DEPENDENT RNA HELICASE"/>
    <property type="match status" value="1"/>
</dbReference>
<dbReference type="PANTHER" id="PTHR18934:SF99">
    <property type="entry name" value="ATP-DEPENDENT RNA HELICASE DHX37-RELATED"/>
    <property type="match status" value="1"/>
</dbReference>
<dbReference type="Pfam" id="PF00270">
    <property type="entry name" value="DEAD"/>
    <property type="match status" value="1"/>
</dbReference>
<dbReference type="Pfam" id="PF00271">
    <property type="entry name" value="Helicase_C"/>
    <property type="match status" value="1"/>
</dbReference>
<dbReference type="Pfam" id="PF12011">
    <property type="entry name" value="NPH-II"/>
    <property type="match status" value="1"/>
</dbReference>
<dbReference type="SMART" id="SM00487">
    <property type="entry name" value="DEXDc"/>
    <property type="match status" value="1"/>
</dbReference>
<dbReference type="SMART" id="SM00490">
    <property type="entry name" value="HELICc"/>
    <property type="match status" value="1"/>
</dbReference>
<dbReference type="SUPFAM" id="SSF52540">
    <property type="entry name" value="P-loop containing nucleoside triphosphate hydrolases"/>
    <property type="match status" value="1"/>
</dbReference>
<dbReference type="PROSITE" id="PS51192">
    <property type="entry name" value="HELICASE_ATP_BIND_1"/>
    <property type="match status" value="1"/>
</dbReference>
<dbReference type="PROSITE" id="PS51194">
    <property type="entry name" value="HELICASE_CTER"/>
    <property type="match status" value="1"/>
</dbReference>
<comment type="function">
    <text evidence="1">NTP-dependent helicase that catalyzes unidirectional unwinding of 3'tailed duplex RNAs and plays an important role during transcription of early mRNAs, presumably by preventing R-loop formation behind the elongating RNA polymerase. Might also play a role in the export of newly synthesized mRNA chains out of the core into the cytoplasm. Required for replication and propagation of viral particles (By similarity).</text>
</comment>
<comment type="catalytic activity">
    <reaction>
        <text>ATP + H2O = ADP + phosphate + H(+)</text>
        <dbReference type="Rhea" id="RHEA:13065"/>
        <dbReference type="ChEBI" id="CHEBI:15377"/>
        <dbReference type="ChEBI" id="CHEBI:15378"/>
        <dbReference type="ChEBI" id="CHEBI:30616"/>
        <dbReference type="ChEBI" id="CHEBI:43474"/>
        <dbReference type="ChEBI" id="CHEBI:456216"/>
        <dbReference type="EC" id="3.6.4.13"/>
    </reaction>
</comment>
<comment type="subunit">
    <text>Monomer.</text>
</comment>
<comment type="subcellular location">
    <subcellularLocation>
        <location>Virion</location>
    </subcellularLocation>
    <text evidence="1">Localizes to the virion core.</text>
</comment>
<comment type="similarity">
    <text evidence="4">Belongs to the DEAD box helicase family. DEAH subfamily.</text>
</comment>
<evidence type="ECO:0000250" key="1"/>
<evidence type="ECO:0000255" key="2">
    <source>
        <dbReference type="PROSITE-ProRule" id="PRU00541"/>
    </source>
</evidence>
<evidence type="ECO:0000255" key="3">
    <source>
        <dbReference type="PROSITE-ProRule" id="PRU00542"/>
    </source>
</evidence>
<evidence type="ECO:0000305" key="4"/>
<sequence>MDMQNITDLYKIDKKTTLYPNIINKYNYMAYLLFPNNATIFNSYITKKEVFEYPMQFAIALYPVYKLYWHNINICLNNRFIYLSNEFKNNISINTVYNLLYNNELKFEDDNIIINGKNLKISYSAYSYVTIISQITINISSLNKYQIYGIIESANYLGILSSYKQNKYFDKNLFSFTKSELRSTMIDVQLKIFEIFISKKNCIISGGTGIGKTTVIPKLFWWFNLLFDGYEFWNTSNENKNINDFIFKPNFEKNKTILSLPRKALIRQMGINYIKSLGFDNISGSPIILKYKDVKKEKEYYNNNPILYPFVLSVNRITINNIKHSNSVIIDEIHEHDKFGDIAIAIARTKKKKYNIRNIVLISATIESDIDNIRIYFKNIVEIYIPGVSLFPVKEIECEDKDVISILKNYMPSVGKSVIIFYETIKKINEYKEILESILIDKIYKIYTIHSKITNINAIINKLQNDKKHIHIILSTNYLESSITITNATLVIDNGKMYQKKFLTGSTMYITESMYIQRKGRVGRISKGTYIRTYSKDLLQTTFKHINYQYLWEYILVFKYNNMDYYNDLFIKPDDPSRIENTLNYLKNINIDIDKYISLLYSKFNKYEINMVEYLSIYINNSTSDIILLNEFIDNIRNSDKYIFPYRLTEIFHKLNVRCRCINITETEEGNINCSFVILNNYDGDPFFKLSFEKSNLICRYNKIYYIVSMSPLYLID</sequence>
<protein>
    <recommendedName>
        <fullName>RNA helicase NPH-II</fullName>
        <ecNumber>3.6.4.13</ecNumber>
    </recommendedName>
    <alternativeName>
        <fullName>Nucleoside triphosphatase II</fullName>
        <shortName>NTPase II</shortName>
    </alternativeName>
    <alternativeName>
        <fullName>Nucleoside triphosphate phosphohydrolase II</fullName>
        <shortName>NPH II</shortName>
    </alternativeName>
</protein>
<gene>
    <name type="primary">NPH2</name>
    <name type="ordered locus">MSV086</name>
</gene>
<proteinExistence type="inferred from homology"/>
<reference key="1">
    <citation type="journal article" date="1999" name="J. Virol.">
        <title>The genome of Melanoplus sanguinipes entomopoxvirus.</title>
        <authorList>
            <person name="Afonso C.L."/>
            <person name="Tulman E.R."/>
            <person name="Lu Z."/>
            <person name="Oma E."/>
            <person name="Kutish G.F."/>
            <person name="Rock D.L."/>
        </authorList>
    </citation>
    <scope>NUCLEOTIDE SEQUENCE [LARGE SCALE GENOMIC DNA]</scope>
    <source>
        <strain>Isolate Tucson</strain>
    </source>
</reference>
<keyword id="KW-0067">ATP-binding</keyword>
<keyword id="KW-0347">Helicase</keyword>
<keyword id="KW-0378">Hydrolase</keyword>
<keyword id="KW-0547">Nucleotide-binding</keyword>
<keyword id="KW-1185">Reference proteome</keyword>
<keyword id="KW-0804">Transcription</keyword>
<keyword id="KW-0946">Virion</keyword>
<feature type="chain" id="PRO_0000055189" description="RNA helicase NPH-II">
    <location>
        <begin position="1"/>
        <end position="717"/>
    </location>
</feature>
<feature type="domain" description="Helicase ATP-binding" evidence="2">
    <location>
        <begin position="193"/>
        <end position="384"/>
    </location>
</feature>
<feature type="domain" description="Helicase C-terminal" evidence="3">
    <location>
        <begin position="406"/>
        <end position="566"/>
    </location>
</feature>
<feature type="short sequence motif" description="DEXH box">
    <location>
        <begin position="331"/>
        <end position="334"/>
    </location>
</feature>
<feature type="binding site" evidence="2">
    <location>
        <begin position="206"/>
        <end position="213"/>
    </location>
    <ligand>
        <name>ATP</name>
        <dbReference type="ChEBI" id="CHEBI:30616"/>
    </ligand>
</feature>